<keyword id="KW-0963">Cytoplasm</keyword>
<keyword id="KW-0255">Endonuclease</keyword>
<keyword id="KW-0378">Hydrolase</keyword>
<keyword id="KW-0464">Manganese</keyword>
<keyword id="KW-0479">Metal-binding</keyword>
<keyword id="KW-0540">Nuclease</keyword>
<dbReference type="EC" id="3.1.26.4" evidence="1"/>
<dbReference type="EMBL" id="CP000848">
    <property type="protein sequence ID" value="ABV75876.1"/>
    <property type="molecule type" value="Genomic_DNA"/>
</dbReference>
<dbReference type="RefSeq" id="WP_012150481.1">
    <property type="nucleotide sequence ID" value="NZ_CP121767.1"/>
</dbReference>
<dbReference type="SMR" id="A8GR51"/>
<dbReference type="GeneID" id="79937048"/>
<dbReference type="KEGG" id="rri:A1G_01510"/>
<dbReference type="HOGENOM" id="CLU_036532_3_1_5"/>
<dbReference type="Proteomes" id="UP000006832">
    <property type="component" value="Chromosome"/>
</dbReference>
<dbReference type="GO" id="GO:0005737">
    <property type="term" value="C:cytoplasm"/>
    <property type="evidence" value="ECO:0007669"/>
    <property type="project" value="UniProtKB-SubCell"/>
</dbReference>
<dbReference type="GO" id="GO:0032299">
    <property type="term" value="C:ribonuclease H2 complex"/>
    <property type="evidence" value="ECO:0007669"/>
    <property type="project" value="TreeGrafter"/>
</dbReference>
<dbReference type="GO" id="GO:0030145">
    <property type="term" value="F:manganese ion binding"/>
    <property type="evidence" value="ECO:0007669"/>
    <property type="project" value="UniProtKB-UniRule"/>
</dbReference>
<dbReference type="GO" id="GO:0003723">
    <property type="term" value="F:RNA binding"/>
    <property type="evidence" value="ECO:0007669"/>
    <property type="project" value="InterPro"/>
</dbReference>
<dbReference type="GO" id="GO:0004523">
    <property type="term" value="F:RNA-DNA hybrid ribonuclease activity"/>
    <property type="evidence" value="ECO:0007669"/>
    <property type="project" value="UniProtKB-UniRule"/>
</dbReference>
<dbReference type="GO" id="GO:0043137">
    <property type="term" value="P:DNA replication, removal of RNA primer"/>
    <property type="evidence" value="ECO:0007669"/>
    <property type="project" value="TreeGrafter"/>
</dbReference>
<dbReference type="GO" id="GO:0006298">
    <property type="term" value="P:mismatch repair"/>
    <property type="evidence" value="ECO:0007669"/>
    <property type="project" value="TreeGrafter"/>
</dbReference>
<dbReference type="CDD" id="cd07182">
    <property type="entry name" value="RNase_HII_bacteria_HII_like"/>
    <property type="match status" value="1"/>
</dbReference>
<dbReference type="Gene3D" id="3.30.420.10">
    <property type="entry name" value="Ribonuclease H-like superfamily/Ribonuclease H"/>
    <property type="match status" value="1"/>
</dbReference>
<dbReference type="HAMAP" id="MF_00052_B">
    <property type="entry name" value="RNase_HII_B"/>
    <property type="match status" value="1"/>
</dbReference>
<dbReference type="InterPro" id="IPR022898">
    <property type="entry name" value="RNase_HII"/>
</dbReference>
<dbReference type="InterPro" id="IPR001352">
    <property type="entry name" value="RNase_HII/HIII"/>
</dbReference>
<dbReference type="InterPro" id="IPR024567">
    <property type="entry name" value="RNase_HII/HIII_dom"/>
</dbReference>
<dbReference type="InterPro" id="IPR012337">
    <property type="entry name" value="RNaseH-like_sf"/>
</dbReference>
<dbReference type="InterPro" id="IPR036397">
    <property type="entry name" value="RNaseH_sf"/>
</dbReference>
<dbReference type="NCBIfam" id="NF000594">
    <property type="entry name" value="PRK00015.1-1"/>
    <property type="match status" value="1"/>
</dbReference>
<dbReference type="NCBIfam" id="NF000595">
    <property type="entry name" value="PRK00015.1-3"/>
    <property type="match status" value="1"/>
</dbReference>
<dbReference type="PANTHER" id="PTHR10954">
    <property type="entry name" value="RIBONUCLEASE H2 SUBUNIT A"/>
    <property type="match status" value="1"/>
</dbReference>
<dbReference type="PANTHER" id="PTHR10954:SF18">
    <property type="entry name" value="RIBONUCLEASE HII"/>
    <property type="match status" value="1"/>
</dbReference>
<dbReference type="Pfam" id="PF01351">
    <property type="entry name" value="RNase_HII"/>
    <property type="match status" value="1"/>
</dbReference>
<dbReference type="SUPFAM" id="SSF53098">
    <property type="entry name" value="Ribonuclease H-like"/>
    <property type="match status" value="1"/>
</dbReference>
<dbReference type="PROSITE" id="PS51975">
    <property type="entry name" value="RNASE_H_2"/>
    <property type="match status" value="1"/>
</dbReference>
<protein>
    <recommendedName>
        <fullName evidence="1">Ribonuclease HII</fullName>
        <shortName evidence="1">RNase HII</shortName>
        <ecNumber evidence="1">3.1.26.4</ecNumber>
    </recommendedName>
</protein>
<gene>
    <name evidence="1" type="primary">rnhB</name>
    <name type="ordered locus">A1G_01510</name>
</gene>
<organism>
    <name type="scientific">Rickettsia rickettsii (strain Sheila Smith)</name>
    <dbReference type="NCBI Taxonomy" id="392021"/>
    <lineage>
        <taxon>Bacteria</taxon>
        <taxon>Pseudomonadati</taxon>
        <taxon>Pseudomonadota</taxon>
        <taxon>Alphaproteobacteria</taxon>
        <taxon>Rickettsiales</taxon>
        <taxon>Rickettsiaceae</taxon>
        <taxon>Rickettsieae</taxon>
        <taxon>Rickettsia</taxon>
        <taxon>spotted fever group</taxon>
    </lineage>
</organism>
<name>RNH2_RICRS</name>
<evidence type="ECO:0000255" key="1">
    <source>
        <dbReference type="HAMAP-Rule" id="MF_00052"/>
    </source>
</evidence>
<evidence type="ECO:0000255" key="2">
    <source>
        <dbReference type="PROSITE-ProRule" id="PRU01319"/>
    </source>
</evidence>
<comment type="function">
    <text evidence="1">Endonuclease that specifically degrades the RNA of RNA-DNA hybrids.</text>
</comment>
<comment type="catalytic activity">
    <reaction evidence="1">
        <text>Endonucleolytic cleavage to 5'-phosphomonoester.</text>
        <dbReference type="EC" id="3.1.26.4"/>
    </reaction>
</comment>
<comment type="cofactor">
    <cofactor evidence="1">
        <name>Mn(2+)</name>
        <dbReference type="ChEBI" id="CHEBI:29035"/>
    </cofactor>
    <cofactor evidence="1">
        <name>Mg(2+)</name>
        <dbReference type="ChEBI" id="CHEBI:18420"/>
    </cofactor>
    <text evidence="1">Manganese or magnesium. Binds 1 divalent metal ion per monomer in the absence of substrate. May bind a second metal ion after substrate binding.</text>
</comment>
<comment type="subcellular location">
    <subcellularLocation>
        <location evidence="1">Cytoplasm</location>
    </subcellularLocation>
</comment>
<comment type="similarity">
    <text evidence="1">Belongs to the RNase HII family.</text>
</comment>
<feature type="chain" id="PRO_1000031197" description="Ribonuclease HII">
    <location>
        <begin position="1"/>
        <end position="193"/>
    </location>
</feature>
<feature type="domain" description="RNase H type-2" evidence="2">
    <location>
        <begin position="15"/>
        <end position="193"/>
    </location>
</feature>
<feature type="binding site" evidence="1">
    <location>
        <position position="21"/>
    </location>
    <ligand>
        <name>a divalent metal cation</name>
        <dbReference type="ChEBI" id="CHEBI:60240"/>
    </ligand>
</feature>
<feature type="binding site" evidence="1">
    <location>
        <position position="22"/>
    </location>
    <ligand>
        <name>a divalent metal cation</name>
        <dbReference type="ChEBI" id="CHEBI:60240"/>
    </ligand>
</feature>
<feature type="binding site" evidence="1">
    <location>
        <position position="112"/>
    </location>
    <ligand>
        <name>a divalent metal cation</name>
        <dbReference type="ChEBI" id="CHEBI:60240"/>
    </ligand>
</feature>
<accession>A8GR51</accession>
<proteinExistence type="inferred from homology"/>
<sequence length="193" mass="21424">MEVDLLHFEKKYHNCIVAGIDEAGRGPLAGPVVASAVIVDNANIITGIKDSKKLSKKKRELLYEQITSNYAWATAIISHTEIDDINILEATKKACSIAVANLSLEPEIVLVDGNMQFKDERFVSIINGDNLSLSIAAASIIAKVTRDRLMLDLSAEFPQYLWHKNSGYGTKEHIEAINIHGLSPYHRRSFRCC</sequence>
<reference key="1">
    <citation type="submission" date="2007-09" db="EMBL/GenBank/DDBJ databases">
        <title>Complete genome sequence of Rickettsia rickettsii.</title>
        <authorList>
            <person name="Madan A."/>
            <person name="Fahey J."/>
            <person name="Helton E."/>
            <person name="Ketteman M."/>
            <person name="Madan A."/>
            <person name="Rodrigues S."/>
            <person name="Sanchez A."/>
            <person name="Dasch G."/>
            <person name="Eremeeva M."/>
        </authorList>
    </citation>
    <scope>NUCLEOTIDE SEQUENCE [LARGE SCALE GENOMIC DNA]</scope>
    <source>
        <strain>Sheila Smith</strain>
    </source>
</reference>